<organism>
    <name type="scientific">Mus musculus</name>
    <name type="common">Mouse</name>
    <dbReference type="NCBI Taxonomy" id="10090"/>
    <lineage>
        <taxon>Eukaryota</taxon>
        <taxon>Metazoa</taxon>
        <taxon>Chordata</taxon>
        <taxon>Craniata</taxon>
        <taxon>Vertebrata</taxon>
        <taxon>Euteleostomi</taxon>
        <taxon>Mammalia</taxon>
        <taxon>Eutheria</taxon>
        <taxon>Euarchontoglires</taxon>
        <taxon>Glires</taxon>
        <taxon>Rodentia</taxon>
        <taxon>Myomorpha</taxon>
        <taxon>Muroidea</taxon>
        <taxon>Muridae</taxon>
        <taxon>Murinae</taxon>
        <taxon>Mus</taxon>
        <taxon>Mus</taxon>
    </lineage>
</organism>
<feature type="initiator methionine" description="Removed" evidence="1">
    <location>
        <position position="1"/>
    </location>
</feature>
<feature type="chain" id="PRO_0000125573" description="U6 snRNA-associated Sm-like protein LSm5">
    <location>
        <begin position="2"/>
        <end position="91"/>
    </location>
</feature>
<feature type="domain" description="Sm" evidence="2">
    <location>
        <begin position="13"/>
        <end position="88"/>
    </location>
</feature>
<feature type="modified residue" description="N-acetylalanine" evidence="1">
    <location>
        <position position="2"/>
    </location>
</feature>
<keyword id="KW-0007">Acetylation</keyword>
<keyword id="KW-0507">mRNA processing</keyword>
<keyword id="KW-0508">mRNA splicing</keyword>
<keyword id="KW-0539">Nucleus</keyword>
<keyword id="KW-1185">Reference proteome</keyword>
<keyword id="KW-0687">Ribonucleoprotein</keyword>
<keyword id="KW-0694">RNA-binding</keyword>
<keyword id="KW-0747">Spliceosome</keyword>
<protein>
    <recommendedName>
        <fullName>U6 snRNA-associated Sm-like protein LSm5</fullName>
    </recommendedName>
</protein>
<dbReference type="EMBL" id="AK009617">
    <property type="protein sequence ID" value="BAB26394.1"/>
    <property type="molecule type" value="mRNA"/>
</dbReference>
<dbReference type="EMBL" id="AK011218">
    <property type="protein sequence ID" value="BAB27475.1"/>
    <property type="molecule type" value="mRNA"/>
</dbReference>
<dbReference type="EMBL" id="BC048459">
    <property type="protein sequence ID" value="AAH48459.1"/>
    <property type="molecule type" value="mRNA"/>
</dbReference>
<dbReference type="EMBL" id="BC061085">
    <property type="protein sequence ID" value="AAH61085.1"/>
    <property type="molecule type" value="mRNA"/>
</dbReference>
<dbReference type="EMBL" id="BC132626">
    <property type="protein sequence ID" value="AAI32627.1"/>
    <property type="molecule type" value="mRNA"/>
</dbReference>
<dbReference type="EMBL" id="BC132628">
    <property type="protein sequence ID" value="AAI32629.1"/>
    <property type="molecule type" value="mRNA"/>
</dbReference>
<dbReference type="CCDS" id="CCDS51788.1"/>
<dbReference type="RefSeq" id="NP_079796.1">
    <property type="nucleotide sequence ID" value="NM_025520.3"/>
</dbReference>
<dbReference type="SMR" id="P62322"/>
<dbReference type="BioGRID" id="211422">
    <property type="interactions" value="4"/>
</dbReference>
<dbReference type="FunCoup" id="P62322">
    <property type="interactions" value="1772"/>
</dbReference>
<dbReference type="IntAct" id="P62322">
    <property type="interactions" value="1"/>
</dbReference>
<dbReference type="MINT" id="P62322"/>
<dbReference type="STRING" id="10090.ENSMUSP00000126565"/>
<dbReference type="iPTMnet" id="P62322"/>
<dbReference type="PhosphoSitePlus" id="P62322"/>
<dbReference type="jPOST" id="P62322"/>
<dbReference type="PaxDb" id="10090-ENSMUSP00000126565"/>
<dbReference type="PeptideAtlas" id="P62322"/>
<dbReference type="ProteomicsDB" id="291967"/>
<dbReference type="Pumba" id="P62322"/>
<dbReference type="TopDownProteomics" id="P62322"/>
<dbReference type="Antibodypedia" id="44303">
    <property type="antibodies" value="73 antibodies from 25 providers"/>
</dbReference>
<dbReference type="DNASU" id="66373"/>
<dbReference type="Ensembl" id="ENSMUST00000170382.5">
    <property type="protein sequence ID" value="ENSMUSP00000126565.3"/>
    <property type="gene ID" value="ENSMUSG00000091625.9"/>
</dbReference>
<dbReference type="GeneID" id="66373"/>
<dbReference type="KEGG" id="mmu:66373"/>
<dbReference type="UCSC" id="uc009cbj.2">
    <property type="organism name" value="mouse"/>
</dbReference>
<dbReference type="AGR" id="MGI:1913623"/>
<dbReference type="CTD" id="23658"/>
<dbReference type="MGI" id="MGI:1913623">
    <property type="gene designation" value="Lsm5"/>
</dbReference>
<dbReference type="VEuPathDB" id="HostDB:ENSMUSG00000091625"/>
<dbReference type="eggNOG" id="KOG1775">
    <property type="taxonomic scope" value="Eukaryota"/>
</dbReference>
<dbReference type="GeneTree" id="ENSGT00390000001455"/>
<dbReference type="HOGENOM" id="CLU_076902_6_1_1"/>
<dbReference type="InParanoid" id="P62322"/>
<dbReference type="OMA" id="YETTPQG"/>
<dbReference type="OrthoDB" id="429711at2759"/>
<dbReference type="PhylomeDB" id="P62322"/>
<dbReference type="TreeFam" id="TF313575"/>
<dbReference type="Reactome" id="R-MMU-430039">
    <property type="pathway name" value="mRNA decay by 5' to 3' exoribonuclease"/>
</dbReference>
<dbReference type="Reactome" id="R-MMU-72163">
    <property type="pathway name" value="mRNA Splicing - Major Pathway"/>
</dbReference>
<dbReference type="BioGRID-ORCS" id="66373">
    <property type="hits" value="25 hits in 74 CRISPR screens"/>
</dbReference>
<dbReference type="ChiTaRS" id="Lsm5">
    <property type="organism name" value="mouse"/>
</dbReference>
<dbReference type="PRO" id="PR:P62322"/>
<dbReference type="Proteomes" id="UP000000589">
    <property type="component" value="Chromosome 6"/>
</dbReference>
<dbReference type="RNAct" id="P62322">
    <property type="molecule type" value="protein"/>
</dbReference>
<dbReference type="Bgee" id="ENSMUSG00000091625">
    <property type="expression patterns" value="Expressed in epiblast cell in embryo and 69 other cell types or tissues"/>
</dbReference>
<dbReference type="ExpressionAtlas" id="P62322">
    <property type="expression patterns" value="baseline and differential"/>
</dbReference>
<dbReference type="GO" id="GO:0005737">
    <property type="term" value="C:cytoplasm"/>
    <property type="evidence" value="ECO:0000266"/>
    <property type="project" value="MGI"/>
</dbReference>
<dbReference type="GO" id="GO:0120115">
    <property type="term" value="C:Lsm2-8 complex"/>
    <property type="evidence" value="ECO:0000250"/>
    <property type="project" value="UniProtKB"/>
</dbReference>
<dbReference type="GO" id="GO:0005634">
    <property type="term" value="C:nucleus"/>
    <property type="evidence" value="ECO:0000250"/>
    <property type="project" value="UniProtKB"/>
</dbReference>
<dbReference type="GO" id="GO:0071005">
    <property type="term" value="C:U2-type precatalytic spliceosome"/>
    <property type="evidence" value="ECO:0000250"/>
    <property type="project" value="UniProtKB"/>
</dbReference>
<dbReference type="GO" id="GO:0046540">
    <property type="term" value="C:U4/U6 x U5 tri-snRNP complex"/>
    <property type="evidence" value="ECO:0000250"/>
    <property type="project" value="UniProtKB"/>
</dbReference>
<dbReference type="GO" id="GO:0046982">
    <property type="term" value="F:protein heterodimerization activity"/>
    <property type="evidence" value="ECO:0000266"/>
    <property type="project" value="MGI"/>
</dbReference>
<dbReference type="GO" id="GO:0003723">
    <property type="term" value="F:RNA binding"/>
    <property type="evidence" value="ECO:0007669"/>
    <property type="project" value="UniProtKB-KW"/>
</dbReference>
<dbReference type="GO" id="GO:0006402">
    <property type="term" value="P:mRNA catabolic process"/>
    <property type="evidence" value="ECO:0000266"/>
    <property type="project" value="MGI"/>
</dbReference>
<dbReference type="GO" id="GO:0000398">
    <property type="term" value="P:mRNA splicing, via spliceosome"/>
    <property type="evidence" value="ECO:0000250"/>
    <property type="project" value="UniProtKB"/>
</dbReference>
<dbReference type="GO" id="GO:0009617">
    <property type="term" value="P:response to bacterium"/>
    <property type="evidence" value="ECO:0000270"/>
    <property type="project" value="MGI"/>
</dbReference>
<dbReference type="CDD" id="cd01732">
    <property type="entry name" value="LSm5"/>
    <property type="match status" value="1"/>
</dbReference>
<dbReference type="FunFam" id="2.30.30.100:FF:000003">
    <property type="entry name" value="U6 snRNA-associated Sm-like protein LSm5"/>
    <property type="match status" value="1"/>
</dbReference>
<dbReference type="Gene3D" id="2.30.30.100">
    <property type="match status" value="1"/>
</dbReference>
<dbReference type="InterPro" id="IPR033871">
    <property type="entry name" value="LSm5"/>
</dbReference>
<dbReference type="InterPro" id="IPR010920">
    <property type="entry name" value="LSM_dom_sf"/>
</dbReference>
<dbReference type="InterPro" id="IPR047575">
    <property type="entry name" value="Sm"/>
</dbReference>
<dbReference type="InterPro" id="IPR001163">
    <property type="entry name" value="Sm_dom_euk/arc"/>
</dbReference>
<dbReference type="PANTHER" id="PTHR20971">
    <property type="entry name" value="U6 SNRNA-ASSOCIATED PROTEIN"/>
    <property type="match status" value="1"/>
</dbReference>
<dbReference type="PANTHER" id="PTHR20971:SF0">
    <property type="entry name" value="U6 SNRNA-ASSOCIATED SM-LIKE PROTEIN LSM5"/>
    <property type="match status" value="1"/>
</dbReference>
<dbReference type="Pfam" id="PF01423">
    <property type="entry name" value="LSM"/>
    <property type="match status" value="1"/>
</dbReference>
<dbReference type="SMART" id="SM00651">
    <property type="entry name" value="Sm"/>
    <property type="match status" value="1"/>
</dbReference>
<dbReference type="SUPFAM" id="SSF50182">
    <property type="entry name" value="Sm-like ribonucleoproteins"/>
    <property type="match status" value="1"/>
</dbReference>
<dbReference type="PROSITE" id="PS52002">
    <property type="entry name" value="SM"/>
    <property type="match status" value="1"/>
</dbReference>
<proteinExistence type="inferred from homology"/>
<sequence length="91" mass="9937">MAANATTNPSQLLPLELVDKCIGSRIHIVMKSDKEIVGTLLGFDDFVNMVLEDVTEFEITPEGRRITKLDQILLNGNNITMLVPGGEGPEV</sequence>
<evidence type="ECO:0000250" key="1">
    <source>
        <dbReference type="UniProtKB" id="Q9Y4Y9"/>
    </source>
</evidence>
<evidence type="ECO:0000255" key="2">
    <source>
        <dbReference type="PROSITE-ProRule" id="PRU01346"/>
    </source>
</evidence>
<evidence type="ECO:0000305" key="3"/>
<comment type="function">
    <text evidence="1">Plays a role in pre-mRNA splicing as component of the U4/U6-U5 tri-snRNP complex that is involved in spliceosome assembly, and as component of the precatalytic spliceosome (spliceosome B complex). The heptameric LSM2-8 complex binds specifically to the 3'-terminal U-tract of U6 snRNA.</text>
</comment>
<comment type="subunit">
    <text evidence="1">Component of the precatalytic spliceosome (spliceosome B complex). Component of the U4/U6-U5 tri-snRNP complex, a building block of the precatalytic spliceosome (spliceosome B complex). The U4/U6-U5 tri-snRNP complex is composed of the U4, U6 and U5 snRNAs and at least PRPF3, PRPF4, PRPF6, PRPF8, PRPF31, SNRNP200, TXNL4A, SNRNP40, SNRPB, SNRPD1, SNRPD2, SNRPD3, SNRPE, SNRPF, SNRPG, DDX23, CD2BP2, PPIH, SNU13, EFTUD2, SART1 and USP39, plus LSM2, LSM3, LSM4, LSM5, LSM6, LSM7 and LSM8. LSM2, LSM3, LSM4, LSM5, LSM6, LSM7 and LSM8 form a heptameric, ring-shaped subcomplex (the LSM2-8 complex) that is part of the U4/U6-U5 tri-snRNP complex and the precatalytic spliceosome.</text>
</comment>
<comment type="subcellular location">
    <subcellularLocation>
        <location evidence="1">Nucleus</location>
    </subcellularLocation>
</comment>
<comment type="similarity">
    <text evidence="3">Belongs to the snRNP Sm proteins family.</text>
</comment>
<accession>P62322</accession>
<accession>A2RTT1</accession>
<gene>
    <name type="primary">Lsm5</name>
</gene>
<name>LSM5_MOUSE</name>
<reference key="1">
    <citation type="journal article" date="2005" name="Science">
        <title>The transcriptional landscape of the mammalian genome.</title>
        <authorList>
            <person name="Carninci P."/>
            <person name="Kasukawa T."/>
            <person name="Katayama S."/>
            <person name="Gough J."/>
            <person name="Frith M.C."/>
            <person name="Maeda N."/>
            <person name="Oyama R."/>
            <person name="Ravasi T."/>
            <person name="Lenhard B."/>
            <person name="Wells C."/>
            <person name="Kodzius R."/>
            <person name="Shimokawa K."/>
            <person name="Bajic V.B."/>
            <person name="Brenner S.E."/>
            <person name="Batalov S."/>
            <person name="Forrest A.R."/>
            <person name="Zavolan M."/>
            <person name="Davis M.J."/>
            <person name="Wilming L.G."/>
            <person name="Aidinis V."/>
            <person name="Allen J.E."/>
            <person name="Ambesi-Impiombato A."/>
            <person name="Apweiler R."/>
            <person name="Aturaliya R.N."/>
            <person name="Bailey T.L."/>
            <person name="Bansal M."/>
            <person name="Baxter L."/>
            <person name="Beisel K.W."/>
            <person name="Bersano T."/>
            <person name="Bono H."/>
            <person name="Chalk A.M."/>
            <person name="Chiu K.P."/>
            <person name="Choudhary V."/>
            <person name="Christoffels A."/>
            <person name="Clutterbuck D.R."/>
            <person name="Crowe M.L."/>
            <person name="Dalla E."/>
            <person name="Dalrymple B.P."/>
            <person name="de Bono B."/>
            <person name="Della Gatta G."/>
            <person name="di Bernardo D."/>
            <person name="Down T."/>
            <person name="Engstrom P."/>
            <person name="Fagiolini M."/>
            <person name="Faulkner G."/>
            <person name="Fletcher C.F."/>
            <person name="Fukushima T."/>
            <person name="Furuno M."/>
            <person name="Futaki S."/>
            <person name="Gariboldi M."/>
            <person name="Georgii-Hemming P."/>
            <person name="Gingeras T.R."/>
            <person name="Gojobori T."/>
            <person name="Green R.E."/>
            <person name="Gustincich S."/>
            <person name="Harbers M."/>
            <person name="Hayashi Y."/>
            <person name="Hensch T.K."/>
            <person name="Hirokawa N."/>
            <person name="Hill D."/>
            <person name="Huminiecki L."/>
            <person name="Iacono M."/>
            <person name="Ikeo K."/>
            <person name="Iwama A."/>
            <person name="Ishikawa T."/>
            <person name="Jakt M."/>
            <person name="Kanapin A."/>
            <person name="Katoh M."/>
            <person name="Kawasawa Y."/>
            <person name="Kelso J."/>
            <person name="Kitamura H."/>
            <person name="Kitano H."/>
            <person name="Kollias G."/>
            <person name="Krishnan S.P."/>
            <person name="Kruger A."/>
            <person name="Kummerfeld S.K."/>
            <person name="Kurochkin I.V."/>
            <person name="Lareau L.F."/>
            <person name="Lazarevic D."/>
            <person name="Lipovich L."/>
            <person name="Liu J."/>
            <person name="Liuni S."/>
            <person name="McWilliam S."/>
            <person name="Madan Babu M."/>
            <person name="Madera M."/>
            <person name="Marchionni L."/>
            <person name="Matsuda H."/>
            <person name="Matsuzawa S."/>
            <person name="Miki H."/>
            <person name="Mignone F."/>
            <person name="Miyake S."/>
            <person name="Morris K."/>
            <person name="Mottagui-Tabar S."/>
            <person name="Mulder N."/>
            <person name="Nakano N."/>
            <person name="Nakauchi H."/>
            <person name="Ng P."/>
            <person name="Nilsson R."/>
            <person name="Nishiguchi S."/>
            <person name="Nishikawa S."/>
            <person name="Nori F."/>
            <person name="Ohara O."/>
            <person name="Okazaki Y."/>
            <person name="Orlando V."/>
            <person name="Pang K.C."/>
            <person name="Pavan W.J."/>
            <person name="Pavesi G."/>
            <person name="Pesole G."/>
            <person name="Petrovsky N."/>
            <person name="Piazza S."/>
            <person name="Reed J."/>
            <person name="Reid J.F."/>
            <person name="Ring B.Z."/>
            <person name="Ringwald M."/>
            <person name="Rost B."/>
            <person name="Ruan Y."/>
            <person name="Salzberg S.L."/>
            <person name="Sandelin A."/>
            <person name="Schneider C."/>
            <person name="Schoenbach C."/>
            <person name="Sekiguchi K."/>
            <person name="Semple C.A."/>
            <person name="Seno S."/>
            <person name="Sessa L."/>
            <person name="Sheng Y."/>
            <person name="Shibata Y."/>
            <person name="Shimada H."/>
            <person name="Shimada K."/>
            <person name="Silva D."/>
            <person name="Sinclair B."/>
            <person name="Sperling S."/>
            <person name="Stupka E."/>
            <person name="Sugiura K."/>
            <person name="Sultana R."/>
            <person name="Takenaka Y."/>
            <person name="Taki K."/>
            <person name="Tammoja K."/>
            <person name="Tan S.L."/>
            <person name="Tang S."/>
            <person name="Taylor M.S."/>
            <person name="Tegner J."/>
            <person name="Teichmann S.A."/>
            <person name="Ueda H.R."/>
            <person name="van Nimwegen E."/>
            <person name="Verardo R."/>
            <person name="Wei C.L."/>
            <person name="Yagi K."/>
            <person name="Yamanishi H."/>
            <person name="Zabarovsky E."/>
            <person name="Zhu S."/>
            <person name="Zimmer A."/>
            <person name="Hide W."/>
            <person name="Bult C."/>
            <person name="Grimmond S.M."/>
            <person name="Teasdale R.D."/>
            <person name="Liu E.T."/>
            <person name="Brusic V."/>
            <person name="Quackenbush J."/>
            <person name="Wahlestedt C."/>
            <person name="Mattick J.S."/>
            <person name="Hume D.A."/>
            <person name="Kai C."/>
            <person name="Sasaki D."/>
            <person name="Tomaru Y."/>
            <person name="Fukuda S."/>
            <person name="Kanamori-Katayama M."/>
            <person name="Suzuki M."/>
            <person name="Aoki J."/>
            <person name="Arakawa T."/>
            <person name="Iida J."/>
            <person name="Imamura K."/>
            <person name="Itoh M."/>
            <person name="Kato T."/>
            <person name="Kawaji H."/>
            <person name="Kawagashira N."/>
            <person name="Kawashima T."/>
            <person name="Kojima M."/>
            <person name="Kondo S."/>
            <person name="Konno H."/>
            <person name="Nakano K."/>
            <person name="Ninomiya N."/>
            <person name="Nishio T."/>
            <person name="Okada M."/>
            <person name="Plessy C."/>
            <person name="Shibata K."/>
            <person name="Shiraki T."/>
            <person name="Suzuki S."/>
            <person name="Tagami M."/>
            <person name="Waki K."/>
            <person name="Watahiki A."/>
            <person name="Okamura-Oho Y."/>
            <person name="Suzuki H."/>
            <person name="Kawai J."/>
            <person name="Hayashizaki Y."/>
        </authorList>
    </citation>
    <scope>NUCLEOTIDE SEQUENCE [LARGE SCALE MRNA]</scope>
    <source>
        <strain>C57BL/6J</strain>
        <tissue>Tongue</tissue>
    </source>
</reference>
<reference key="2">
    <citation type="journal article" date="2004" name="Genome Res.">
        <title>The status, quality, and expansion of the NIH full-length cDNA project: the Mammalian Gene Collection (MGC).</title>
        <authorList>
            <consortium name="The MGC Project Team"/>
        </authorList>
    </citation>
    <scope>NUCLEOTIDE SEQUENCE [LARGE SCALE MRNA]</scope>
    <source>
        <tissue>Brain</tissue>
        <tissue>Heart</tissue>
        <tissue>Lung</tissue>
    </source>
</reference>